<keyword id="KW-0067">ATP-binding</keyword>
<keyword id="KW-1003">Cell membrane</keyword>
<keyword id="KW-0472">Membrane</keyword>
<keyword id="KW-0547">Nucleotide-binding</keyword>
<keyword id="KW-1278">Translocase</keyword>
<keyword id="KW-0813">Transport</keyword>
<comment type="function">
    <text evidence="1">Part of the ABC transporter complex PotABCD involved in spermidine/putrescine import. Responsible for energy coupling to the transport system.</text>
</comment>
<comment type="catalytic activity">
    <reaction evidence="1">
        <text>ATP + H2O + polyamine-[polyamine-binding protein]Side 1 = ADP + phosphate + polyamineSide 2 + [polyamine-binding protein]Side 1.</text>
        <dbReference type="EC" id="7.6.2.11"/>
    </reaction>
</comment>
<comment type="subunit">
    <text evidence="1">The complex is composed of two ATP-binding proteins (PotA), two transmembrane proteins (PotB and PotC) and a solute-binding protein (PotD).</text>
</comment>
<comment type="subcellular location">
    <subcellularLocation>
        <location evidence="1">Cell membrane</location>
        <topology evidence="1">Peripheral membrane protein</topology>
    </subcellularLocation>
</comment>
<comment type="similarity">
    <text evidence="1">Belongs to the ABC transporter superfamily. Spermidine/putrescine importer (TC 3.A.1.11.1) family.</text>
</comment>
<dbReference type="EC" id="7.6.2.11" evidence="1"/>
<dbReference type="EMBL" id="AE015929">
    <property type="protein sequence ID" value="AAO04394.1"/>
    <property type="molecule type" value="Genomic_DNA"/>
</dbReference>
<dbReference type="RefSeq" id="NP_764352.1">
    <property type="nucleotide sequence ID" value="NC_004461.1"/>
</dbReference>
<dbReference type="RefSeq" id="WP_001831686.1">
    <property type="nucleotide sequence ID" value="NZ_WBME01000031.1"/>
</dbReference>
<dbReference type="SMR" id="Q8CPN0"/>
<dbReference type="KEGG" id="sep:SE_0797"/>
<dbReference type="PATRIC" id="fig|176280.10.peg.770"/>
<dbReference type="eggNOG" id="COG3842">
    <property type="taxonomic scope" value="Bacteria"/>
</dbReference>
<dbReference type="HOGENOM" id="CLU_000604_1_1_9"/>
<dbReference type="OrthoDB" id="9790614at2"/>
<dbReference type="Proteomes" id="UP000001411">
    <property type="component" value="Chromosome"/>
</dbReference>
<dbReference type="GO" id="GO:0043190">
    <property type="term" value="C:ATP-binding cassette (ABC) transporter complex"/>
    <property type="evidence" value="ECO:0007669"/>
    <property type="project" value="InterPro"/>
</dbReference>
<dbReference type="GO" id="GO:0015594">
    <property type="term" value="F:ABC-type putrescine transporter activity"/>
    <property type="evidence" value="ECO:0007669"/>
    <property type="project" value="InterPro"/>
</dbReference>
<dbReference type="GO" id="GO:0005524">
    <property type="term" value="F:ATP binding"/>
    <property type="evidence" value="ECO:0007669"/>
    <property type="project" value="UniProtKB-KW"/>
</dbReference>
<dbReference type="GO" id="GO:0016887">
    <property type="term" value="F:ATP hydrolysis activity"/>
    <property type="evidence" value="ECO:0007669"/>
    <property type="project" value="InterPro"/>
</dbReference>
<dbReference type="CDD" id="cd03300">
    <property type="entry name" value="ABC_PotA_N"/>
    <property type="match status" value="1"/>
</dbReference>
<dbReference type="FunFam" id="3.40.50.300:FF:000425">
    <property type="entry name" value="Probable ABC transporter, ATP-binding subunit"/>
    <property type="match status" value="1"/>
</dbReference>
<dbReference type="Gene3D" id="2.40.50.100">
    <property type="match status" value="1"/>
</dbReference>
<dbReference type="Gene3D" id="2.40.50.140">
    <property type="entry name" value="Nucleic acid-binding proteins"/>
    <property type="match status" value="1"/>
</dbReference>
<dbReference type="Gene3D" id="3.40.50.300">
    <property type="entry name" value="P-loop containing nucleotide triphosphate hydrolases"/>
    <property type="match status" value="1"/>
</dbReference>
<dbReference type="InterPro" id="IPR003593">
    <property type="entry name" value="AAA+_ATPase"/>
</dbReference>
<dbReference type="InterPro" id="IPR050093">
    <property type="entry name" value="ABC_SmlMolc_Importer"/>
</dbReference>
<dbReference type="InterPro" id="IPR003439">
    <property type="entry name" value="ABC_transporter-like_ATP-bd"/>
</dbReference>
<dbReference type="InterPro" id="IPR017871">
    <property type="entry name" value="ABC_transporter-like_CS"/>
</dbReference>
<dbReference type="InterPro" id="IPR008995">
    <property type="entry name" value="Mo/tungstate-bd_C_term_dom"/>
</dbReference>
<dbReference type="InterPro" id="IPR012340">
    <property type="entry name" value="NA-bd_OB-fold"/>
</dbReference>
<dbReference type="InterPro" id="IPR027417">
    <property type="entry name" value="P-loop_NTPase"/>
</dbReference>
<dbReference type="InterPro" id="IPR005893">
    <property type="entry name" value="PotA-like"/>
</dbReference>
<dbReference type="InterPro" id="IPR017879">
    <property type="entry name" value="PotA_ATP-bd"/>
</dbReference>
<dbReference type="InterPro" id="IPR013611">
    <property type="entry name" value="Transp-assoc_OB_typ2"/>
</dbReference>
<dbReference type="NCBIfam" id="TIGR01187">
    <property type="entry name" value="potA"/>
    <property type="match status" value="1"/>
</dbReference>
<dbReference type="PANTHER" id="PTHR42781">
    <property type="entry name" value="SPERMIDINE/PUTRESCINE IMPORT ATP-BINDING PROTEIN POTA"/>
    <property type="match status" value="1"/>
</dbReference>
<dbReference type="PANTHER" id="PTHR42781:SF4">
    <property type="entry name" value="SPERMIDINE_PUTRESCINE IMPORT ATP-BINDING PROTEIN POTA"/>
    <property type="match status" value="1"/>
</dbReference>
<dbReference type="Pfam" id="PF00005">
    <property type="entry name" value="ABC_tran"/>
    <property type="match status" value="1"/>
</dbReference>
<dbReference type="Pfam" id="PF08402">
    <property type="entry name" value="TOBE_2"/>
    <property type="match status" value="1"/>
</dbReference>
<dbReference type="SMART" id="SM00382">
    <property type="entry name" value="AAA"/>
    <property type="match status" value="1"/>
</dbReference>
<dbReference type="SUPFAM" id="SSF50331">
    <property type="entry name" value="MOP-like"/>
    <property type="match status" value="1"/>
</dbReference>
<dbReference type="SUPFAM" id="SSF52540">
    <property type="entry name" value="P-loop containing nucleoside triphosphate hydrolases"/>
    <property type="match status" value="1"/>
</dbReference>
<dbReference type="PROSITE" id="PS00211">
    <property type="entry name" value="ABC_TRANSPORTER_1"/>
    <property type="match status" value="1"/>
</dbReference>
<dbReference type="PROSITE" id="PS50893">
    <property type="entry name" value="ABC_TRANSPORTER_2"/>
    <property type="match status" value="1"/>
</dbReference>
<dbReference type="PROSITE" id="PS51305">
    <property type="entry name" value="POTA"/>
    <property type="match status" value="1"/>
</dbReference>
<feature type="chain" id="PRO_0000286294" description="Spermidine/putrescine import ATP-binding protein PotA">
    <location>
        <begin position="1"/>
        <end position="364"/>
    </location>
</feature>
<feature type="domain" description="ABC transporter" evidence="1">
    <location>
        <begin position="5"/>
        <end position="235"/>
    </location>
</feature>
<feature type="binding site" evidence="1">
    <location>
        <begin position="37"/>
        <end position="44"/>
    </location>
    <ligand>
        <name>ATP</name>
        <dbReference type="ChEBI" id="CHEBI:30616"/>
    </ligand>
</feature>
<accession>Q8CPN0</accession>
<sequence length="364" mass="41516">MNPLLSFKDVSKGFEDVQILNEINIDIEPSYFYTLLGPSGCGKTTILKLIAGFEYPDSGDIIYKDKPIGKMPPNKRKVNTVFQDYALFPHLNVFDNIAYGLKLKKLSKSEIKRKVTEALQLVKLSGYEHRQIQGMSGGQKQRVAIARAIVNEPEILLLDESLSALDLKLRTEMQYLLRELQSRLGITFIFVTHDQEEALALSDYIFVMKDGKIQQFGTPIDIYDEPVNRFVADFIGESNIVHGTMVEDFVVNIYGQNFDCVDMGIKENKKVEVVIRPEDISLVSQNDGLFKAKVDSMLFRGVHYEICCKDRKGYEWVIQSTKKANVGSEVGLYFEPEAIHIMVPGETEEEFDKRIESYEDYHHA</sequence>
<proteinExistence type="inferred from homology"/>
<reference key="1">
    <citation type="journal article" date="2003" name="Mol. Microbiol.">
        <title>Genome-based analysis of virulence genes in a non-biofilm-forming Staphylococcus epidermidis strain (ATCC 12228).</title>
        <authorList>
            <person name="Zhang Y.-Q."/>
            <person name="Ren S.-X."/>
            <person name="Li H.-L."/>
            <person name="Wang Y.-X."/>
            <person name="Fu G."/>
            <person name="Yang J."/>
            <person name="Qin Z.-Q."/>
            <person name="Miao Y.-G."/>
            <person name="Wang W.-Y."/>
            <person name="Chen R.-S."/>
            <person name="Shen Y."/>
            <person name="Chen Z."/>
            <person name="Yuan Z.-H."/>
            <person name="Zhao G.-P."/>
            <person name="Qu D."/>
            <person name="Danchin A."/>
            <person name="Wen Y.-M."/>
        </authorList>
    </citation>
    <scope>NUCLEOTIDE SEQUENCE [LARGE SCALE GENOMIC DNA]</scope>
    <source>
        <strain>ATCC 12228 / FDA PCI 1200</strain>
    </source>
</reference>
<evidence type="ECO:0000255" key="1">
    <source>
        <dbReference type="HAMAP-Rule" id="MF_01726"/>
    </source>
</evidence>
<protein>
    <recommendedName>
        <fullName evidence="1">Spermidine/putrescine import ATP-binding protein PotA</fullName>
        <ecNumber evidence="1">7.6.2.11</ecNumber>
    </recommendedName>
</protein>
<name>POTA_STAES</name>
<gene>
    <name evidence="1" type="primary">potA</name>
    <name type="ordered locus">SE_0797</name>
</gene>
<organism>
    <name type="scientific">Staphylococcus epidermidis (strain ATCC 12228 / FDA PCI 1200)</name>
    <dbReference type="NCBI Taxonomy" id="176280"/>
    <lineage>
        <taxon>Bacteria</taxon>
        <taxon>Bacillati</taxon>
        <taxon>Bacillota</taxon>
        <taxon>Bacilli</taxon>
        <taxon>Bacillales</taxon>
        <taxon>Staphylococcaceae</taxon>
        <taxon>Staphylococcus</taxon>
    </lineage>
</organism>